<proteinExistence type="evidence at protein level"/>
<protein>
    <recommendedName>
        <fullName>LIM domain kinase 1</fullName>
        <shortName>LIMK-1</shortName>
        <ecNumber evidence="6">2.7.11.1</ecNumber>
    </recommendedName>
    <alternativeName>
        <fullName>dLIMK</fullName>
    </alternativeName>
</protein>
<dbReference type="EC" id="2.7.11.1" evidence="6"/>
<dbReference type="EMBL" id="AB042816">
    <property type="protein sequence ID" value="BAB17233.1"/>
    <property type="molecule type" value="mRNA"/>
</dbReference>
<dbReference type="EMBL" id="AB042818">
    <property type="protein sequence ID" value="BAB17234.1"/>
    <property type="molecule type" value="mRNA"/>
</dbReference>
<dbReference type="EMBL" id="AE014298">
    <property type="protein sequence ID" value="AAF48176.2"/>
    <property type="molecule type" value="Genomic_DNA"/>
</dbReference>
<dbReference type="EMBL" id="AE014298">
    <property type="protein sequence ID" value="AAN09311.1"/>
    <property type="molecule type" value="Genomic_DNA"/>
</dbReference>
<dbReference type="EMBL" id="AE014298">
    <property type="protein sequence ID" value="AAN09312.1"/>
    <property type="molecule type" value="Genomic_DNA"/>
</dbReference>
<dbReference type="EMBL" id="AY119587">
    <property type="protein sequence ID" value="AAM50241.1"/>
    <property type="molecule type" value="mRNA"/>
</dbReference>
<dbReference type="RefSeq" id="NP_001162733.1">
    <molecule id="Q8IR79-2"/>
    <property type="nucleotide sequence ID" value="NM_001169262.1"/>
</dbReference>
<dbReference type="RefSeq" id="NP_511139.2">
    <molecule id="Q8IR79-1"/>
    <property type="nucleotide sequence ID" value="NM_078584.3"/>
</dbReference>
<dbReference type="RefSeq" id="NP_727621.1">
    <molecule id="Q8IR79-2"/>
    <property type="nucleotide sequence ID" value="NM_167326.2"/>
</dbReference>
<dbReference type="RefSeq" id="NP_727622.1">
    <molecule id="Q8IR79-3"/>
    <property type="nucleotide sequence ID" value="NM_167327.2"/>
</dbReference>
<dbReference type="SMR" id="Q8IR79"/>
<dbReference type="BioGRID" id="58605">
    <property type="interactions" value="51"/>
</dbReference>
<dbReference type="FunCoup" id="Q8IR79">
    <property type="interactions" value="699"/>
</dbReference>
<dbReference type="IntAct" id="Q8IR79">
    <property type="interactions" value="9"/>
</dbReference>
<dbReference type="STRING" id="7227.FBpp0073493"/>
<dbReference type="GlyGen" id="Q8IR79">
    <property type="glycosylation" value="1 site"/>
</dbReference>
<dbReference type="iPTMnet" id="Q8IR79"/>
<dbReference type="PaxDb" id="7227-FBpp0073493"/>
<dbReference type="DNASU" id="32207"/>
<dbReference type="EnsemblMetazoa" id="FBtr0073659">
    <molecule id="Q8IR79-2"/>
    <property type="protein sequence ID" value="FBpp0073492"/>
    <property type="gene ID" value="FBgn0283712"/>
</dbReference>
<dbReference type="EnsemblMetazoa" id="FBtr0073660">
    <molecule id="Q8IR79-1"/>
    <property type="protein sequence ID" value="FBpp0073493"/>
    <property type="gene ID" value="FBgn0283712"/>
</dbReference>
<dbReference type="EnsemblMetazoa" id="FBtr0073661">
    <molecule id="Q8IR79-3"/>
    <property type="protein sequence ID" value="FBpp0073494"/>
    <property type="gene ID" value="FBgn0283712"/>
</dbReference>
<dbReference type="EnsemblMetazoa" id="FBtr0301830">
    <molecule id="Q8IR79-2"/>
    <property type="protein sequence ID" value="FBpp0291044"/>
    <property type="gene ID" value="FBgn0283712"/>
</dbReference>
<dbReference type="GeneID" id="32207"/>
<dbReference type="KEGG" id="dme:Dmel_CG1848"/>
<dbReference type="AGR" id="FB:FBgn0283712"/>
<dbReference type="CTD" id="3984"/>
<dbReference type="FlyBase" id="FBgn0283712">
    <property type="gene designation" value="LIMK1"/>
</dbReference>
<dbReference type="VEuPathDB" id="VectorBase:FBgn0283712"/>
<dbReference type="eggNOG" id="KOG1187">
    <property type="taxonomic scope" value="Eukaryota"/>
</dbReference>
<dbReference type="GeneTree" id="ENSGT00940000170287"/>
<dbReference type="InParanoid" id="Q8IR79"/>
<dbReference type="OMA" id="FLWLTSM"/>
<dbReference type="OrthoDB" id="20134at2759"/>
<dbReference type="PhylomeDB" id="Q8IR79"/>
<dbReference type="Reactome" id="R-DME-2029482">
    <property type="pathway name" value="Regulation of actin dynamics for phagocytic cup formation"/>
</dbReference>
<dbReference type="Reactome" id="R-DME-399954">
    <property type="pathway name" value="Sema3A PAK dependent Axon repulsion"/>
</dbReference>
<dbReference type="Reactome" id="R-DME-5627123">
    <property type="pathway name" value="RHO GTPases activate PAKs"/>
</dbReference>
<dbReference type="GenomeRNAi" id="32207"/>
<dbReference type="PRO" id="PR:Q8IR79"/>
<dbReference type="Proteomes" id="UP000000803">
    <property type="component" value="Chromosome X"/>
</dbReference>
<dbReference type="Bgee" id="FBgn0283712">
    <property type="expression patterns" value="Expressed in outer photoreceptor cell (Drosophila) in insect head and 220 other cell types or tissues"/>
</dbReference>
<dbReference type="ExpressionAtlas" id="Q8IR79">
    <property type="expression patterns" value="baseline and differential"/>
</dbReference>
<dbReference type="GO" id="GO:0032154">
    <property type="term" value="C:cleavage furrow"/>
    <property type="evidence" value="ECO:0007669"/>
    <property type="project" value="UniProtKB-SubCell"/>
</dbReference>
<dbReference type="GO" id="GO:0005737">
    <property type="term" value="C:cytoplasm"/>
    <property type="evidence" value="ECO:0000318"/>
    <property type="project" value="GO_Central"/>
</dbReference>
<dbReference type="GO" id="GO:0030496">
    <property type="term" value="C:midbody"/>
    <property type="evidence" value="ECO:0007669"/>
    <property type="project" value="UniProtKB-SubCell"/>
</dbReference>
<dbReference type="GO" id="GO:0005634">
    <property type="term" value="C:nucleus"/>
    <property type="evidence" value="ECO:0000318"/>
    <property type="project" value="GO_Central"/>
</dbReference>
<dbReference type="GO" id="GO:0005524">
    <property type="term" value="F:ATP binding"/>
    <property type="evidence" value="ECO:0007669"/>
    <property type="project" value="UniProtKB-KW"/>
</dbReference>
<dbReference type="GO" id="GO:0046872">
    <property type="term" value="F:metal ion binding"/>
    <property type="evidence" value="ECO:0007669"/>
    <property type="project" value="UniProtKB-KW"/>
</dbReference>
<dbReference type="GO" id="GO:0106310">
    <property type="term" value="F:protein serine kinase activity"/>
    <property type="evidence" value="ECO:0007669"/>
    <property type="project" value="RHEA"/>
</dbReference>
<dbReference type="GO" id="GO:0004674">
    <property type="term" value="F:protein serine/threonine kinase activity"/>
    <property type="evidence" value="ECO:0000318"/>
    <property type="project" value="GO_Central"/>
</dbReference>
<dbReference type="GO" id="GO:0030036">
    <property type="term" value="P:actin cytoskeleton organization"/>
    <property type="evidence" value="ECO:0000314"/>
    <property type="project" value="UniProtKB"/>
</dbReference>
<dbReference type="GO" id="GO:0007560">
    <property type="term" value="P:imaginal disc morphogenesis"/>
    <property type="evidence" value="ECO:0000315"/>
    <property type="project" value="UniProtKB"/>
</dbReference>
<dbReference type="CDD" id="cd09364">
    <property type="entry name" value="LIM1_LIMK"/>
    <property type="match status" value="1"/>
</dbReference>
<dbReference type="CDD" id="cd09365">
    <property type="entry name" value="LIM2_LIMK"/>
    <property type="match status" value="1"/>
</dbReference>
<dbReference type="CDD" id="cd06754">
    <property type="entry name" value="PDZ_LIMK-like"/>
    <property type="match status" value="1"/>
</dbReference>
<dbReference type="CDD" id="cd14154">
    <property type="entry name" value="STKc_LIMK"/>
    <property type="match status" value="1"/>
</dbReference>
<dbReference type="FunFam" id="2.10.110.10:FF:000082">
    <property type="entry name" value="LIM domain kinase 1"/>
    <property type="match status" value="1"/>
</dbReference>
<dbReference type="FunFam" id="2.10.110.10:FF:000038">
    <property type="entry name" value="LIM domain kinase 2"/>
    <property type="match status" value="1"/>
</dbReference>
<dbReference type="FunFam" id="3.30.200.20:FF:000038">
    <property type="entry name" value="LIM domain kinase 2"/>
    <property type="match status" value="1"/>
</dbReference>
<dbReference type="FunFam" id="1.10.510.10:FF:000197">
    <property type="entry name" value="LIM domain kinase 2 isoform X1"/>
    <property type="match status" value="1"/>
</dbReference>
<dbReference type="Gene3D" id="2.30.42.10">
    <property type="match status" value="1"/>
</dbReference>
<dbReference type="Gene3D" id="2.10.110.10">
    <property type="entry name" value="Cysteine Rich Protein"/>
    <property type="match status" value="2"/>
</dbReference>
<dbReference type="Gene3D" id="3.30.200.20">
    <property type="entry name" value="Phosphorylase Kinase, domain 1"/>
    <property type="match status" value="1"/>
</dbReference>
<dbReference type="Gene3D" id="1.10.510.10">
    <property type="entry name" value="Transferase(Phosphotransferase) domain 1"/>
    <property type="match status" value="1"/>
</dbReference>
<dbReference type="InterPro" id="IPR050940">
    <property type="entry name" value="Actin_reg-Ser/Thr_kinase"/>
</dbReference>
<dbReference type="InterPro" id="IPR011009">
    <property type="entry name" value="Kinase-like_dom_sf"/>
</dbReference>
<dbReference type="InterPro" id="IPR001478">
    <property type="entry name" value="PDZ"/>
</dbReference>
<dbReference type="InterPro" id="IPR036034">
    <property type="entry name" value="PDZ_sf"/>
</dbReference>
<dbReference type="InterPro" id="IPR000719">
    <property type="entry name" value="Prot_kinase_dom"/>
</dbReference>
<dbReference type="InterPro" id="IPR017441">
    <property type="entry name" value="Protein_kinase_ATP_BS"/>
</dbReference>
<dbReference type="InterPro" id="IPR001245">
    <property type="entry name" value="Ser-Thr/Tyr_kinase_cat_dom"/>
</dbReference>
<dbReference type="InterPro" id="IPR001781">
    <property type="entry name" value="Znf_LIM"/>
</dbReference>
<dbReference type="PANTHER" id="PTHR46485">
    <property type="entry name" value="LIM DOMAIN KINASE 1"/>
    <property type="match status" value="1"/>
</dbReference>
<dbReference type="PANTHER" id="PTHR46485:SF4">
    <property type="entry name" value="LIM DOMAIN KINASE 1"/>
    <property type="match status" value="1"/>
</dbReference>
<dbReference type="Pfam" id="PF00412">
    <property type="entry name" value="LIM"/>
    <property type="match status" value="2"/>
</dbReference>
<dbReference type="Pfam" id="PF00595">
    <property type="entry name" value="PDZ"/>
    <property type="match status" value="1"/>
</dbReference>
<dbReference type="Pfam" id="PF07714">
    <property type="entry name" value="PK_Tyr_Ser-Thr"/>
    <property type="match status" value="2"/>
</dbReference>
<dbReference type="SMART" id="SM00132">
    <property type="entry name" value="LIM"/>
    <property type="match status" value="2"/>
</dbReference>
<dbReference type="SUPFAM" id="SSF57716">
    <property type="entry name" value="Glucocorticoid receptor-like (DNA-binding domain)"/>
    <property type="match status" value="2"/>
</dbReference>
<dbReference type="SUPFAM" id="SSF50156">
    <property type="entry name" value="PDZ domain-like"/>
    <property type="match status" value="1"/>
</dbReference>
<dbReference type="SUPFAM" id="SSF56112">
    <property type="entry name" value="Protein kinase-like (PK-like)"/>
    <property type="match status" value="1"/>
</dbReference>
<dbReference type="PROSITE" id="PS00478">
    <property type="entry name" value="LIM_DOMAIN_1"/>
    <property type="match status" value="2"/>
</dbReference>
<dbReference type="PROSITE" id="PS50023">
    <property type="entry name" value="LIM_DOMAIN_2"/>
    <property type="match status" value="2"/>
</dbReference>
<dbReference type="PROSITE" id="PS50106">
    <property type="entry name" value="PDZ"/>
    <property type="match status" value="1"/>
</dbReference>
<dbReference type="PROSITE" id="PS00107">
    <property type="entry name" value="PROTEIN_KINASE_ATP"/>
    <property type="match status" value="1"/>
</dbReference>
<dbReference type="PROSITE" id="PS50011">
    <property type="entry name" value="PROTEIN_KINASE_DOM"/>
    <property type="match status" value="1"/>
</dbReference>
<organism>
    <name type="scientific">Drosophila melanogaster</name>
    <name type="common">Fruit fly</name>
    <dbReference type="NCBI Taxonomy" id="7227"/>
    <lineage>
        <taxon>Eukaryota</taxon>
        <taxon>Metazoa</taxon>
        <taxon>Ecdysozoa</taxon>
        <taxon>Arthropoda</taxon>
        <taxon>Hexapoda</taxon>
        <taxon>Insecta</taxon>
        <taxon>Pterygota</taxon>
        <taxon>Neoptera</taxon>
        <taxon>Endopterygota</taxon>
        <taxon>Diptera</taxon>
        <taxon>Brachycera</taxon>
        <taxon>Muscomorpha</taxon>
        <taxon>Ephydroidea</taxon>
        <taxon>Drosophilidae</taxon>
        <taxon>Drosophila</taxon>
        <taxon>Sophophora</taxon>
    </lineage>
</organism>
<keyword id="KW-0025">Alternative splicing</keyword>
<keyword id="KW-0067">ATP-binding</keyword>
<keyword id="KW-0963">Cytoplasm</keyword>
<keyword id="KW-0418">Kinase</keyword>
<keyword id="KW-0440">LIM domain</keyword>
<keyword id="KW-0479">Metal-binding</keyword>
<keyword id="KW-0547">Nucleotide-binding</keyword>
<keyword id="KW-0597">Phosphoprotein</keyword>
<keyword id="KW-1185">Reference proteome</keyword>
<keyword id="KW-0677">Repeat</keyword>
<keyword id="KW-0723">Serine/threonine-protein kinase</keyword>
<keyword id="KW-0808">Transferase</keyword>
<keyword id="KW-0862">Zinc</keyword>
<gene>
    <name type="primary">LIMK1</name>
    <name type="synonym">LIMK</name>
    <name type="ORF">CG1848</name>
</gene>
<feature type="chain" id="PRO_0000075808" description="LIM domain kinase 1">
    <location>
        <begin position="1"/>
        <end position="1257"/>
    </location>
</feature>
<feature type="domain" description="LIM zinc-binding 1" evidence="2">
    <location>
        <begin position="31"/>
        <end position="93"/>
    </location>
</feature>
<feature type="domain" description="LIM zinc-binding 2" evidence="2">
    <location>
        <begin position="94"/>
        <end position="154"/>
    </location>
</feature>
<feature type="domain" description="PDZ" evidence="3">
    <location>
        <begin position="174"/>
        <end position="274"/>
    </location>
</feature>
<feature type="domain" description="Protein kinase" evidence="4">
    <location>
        <begin position="401"/>
        <end position="686"/>
    </location>
</feature>
<feature type="region of interest" description="Interaction with LATS1" evidence="8">
    <location>
        <begin position="1"/>
        <end position="147"/>
    </location>
</feature>
<feature type="region of interest" description="Disordered" evidence="5">
    <location>
        <begin position="1"/>
        <end position="24"/>
    </location>
</feature>
<feature type="region of interest" description="Disordered" evidence="5">
    <location>
        <begin position="552"/>
        <end position="587"/>
    </location>
</feature>
<feature type="region of interest" description="Disordered" evidence="5">
    <location>
        <begin position="759"/>
        <end position="811"/>
    </location>
</feature>
<feature type="region of interest" description="Disordered" evidence="5">
    <location>
        <begin position="881"/>
        <end position="900"/>
    </location>
</feature>
<feature type="region of interest" description="Disordered" evidence="5">
    <location>
        <begin position="1010"/>
        <end position="1037"/>
    </location>
</feature>
<feature type="region of interest" description="Disordered" evidence="5">
    <location>
        <begin position="1085"/>
        <end position="1182"/>
    </location>
</feature>
<feature type="region of interest" description="Disordered" evidence="5">
    <location>
        <begin position="1212"/>
        <end position="1257"/>
    </location>
</feature>
<feature type="compositionally biased region" description="Gly residues" evidence="5">
    <location>
        <begin position="11"/>
        <end position="24"/>
    </location>
</feature>
<feature type="compositionally biased region" description="Basic and acidic residues" evidence="5">
    <location>
        <begin position="794"/>
        <end position="811"/>
    </location>
</feature>
<feature type="compositionally biased region" description="Polar residues" evidence="5">
    <location>
        <begin position="1085"/>
        <end position="1095"/>
    </location>
</feature>
<feature type="compositionally biased region" description="Polar residues" evidence="5">
    <location>
        <begin position="1113"/>
        <end position="1125"/>
    </location>
</feature>
<feature type="compositionally biased region" description="Low complexity" evidence="5">
    <location>
        <begin position="1126"/>
        <end position="1137"/>
    </location>
</feature>
<feature type="compositionally biased region" description="Low complexity" evidence="5">
    <location>
        <begin position="1145"/>
        <end position="1166"/>
    </location>
</feature>
<feature type="active site" evidence="1">
    <location>
        <position position="522"/>
    </location>
</feature>
<feature type="binding site" evidence="4">
    <location>
        <begin position="407"/>
        <end position="415"/>
    </location>
    <ligand>
        <name>ATP</name>
        <dbReference type="ChEBI" id="CHEBI:30616"/>
    </ligand>
</feature>
<feature type="binding site" evidence="4">
    <location>
        <position position="430"/>
    </location>
    <ligand>
        <name>ATP</name>
        <dbReference type="ChEBI" id="CHEBI:30616"/>
    </ligand>
</feature>
<feature type="modified residue" description="Phosphoserine" evidence="11">
    <location>
        <position position="1000"/>
    </location>
</feature>
<feature type="splice variant" id="VSP_016308" description="In isoform 3." evidence="14">
    <location>
        <begin position="1"/>
        <end position="205"/>
    </location>
</feature>
<feature type="splice variant" id="VSP_016309" description="In isoform 2." evidence="12 13">
    <original>DLFCNFFLWLTSMAEQCCGAPYR</original>
    <variation>E</variation>
    <location>
        <begin position="203"/>
        <end position="225"/>
    </location>
</feature>
<feature type="splice variant" id="VSP_016310" description="In isoform 3." evidence="14">
    <original>CNFFLWLTSMAEQCCGAPYR</original>
    <variation>MSFWLHFVLKKILPWLKSTK</variation>
    <location>
        <begin position="206"/>
        <end position="225"/>
    </location>
</feature>
<feature type="mutagenesis site" description="Abrogates kinase activity." evidence="6 7 8 9 10">
    <original>D</original>
    <variation>A</variation>
    <location>
        <position position="522"/>
    </location>
</feature>
<feature type="sequence conflict" description="In Ref. 1; BAB17233/BAB17234." evidence="14" ref="1">
    <original>V</original>
    <variation>L</variation>
    <location>
        <position position="613"/>
    </location>
</feature>
<comment type="function">
    <text evidence="6 7 8 9 10">Protein kinase which regulates actin filament dynamics. Phosphorylates and inactivates the actin binding/depolymerizing factor tsr/cofilin, thereby stabilizing the actin cytoskeleton. Modulation of actin cytoskeleton dynamics may be essential for imaginal disk morphogenesis and axon guidance.</text>
</comment>
<comment type="catalytic activity">
    <reaction evidence="6">
        <text>L-seryl-[protein] + ATP = O-phospho-L-seryl-[protein] + ADP + H(+)</text>
        <dbReference type="Rhea" id="RHEA:17989"/>
        <dbReference type="Rhea" id="RHEA-COMP:9863"/>
        <dbReference type="Rhea" id="RHEA-COMP:11604"/>
        <dbReference type="ChEBI" id="CHEBI:15378"/>
        <dbReference type="ChEBI" id="CHEBI:29999"/>
        <dbReference type="ChEBI" id="CHEBI:30616"/>
        <dbReference type="ChEBI" id="CHEBI:83421"/>
        <dbReference type="ChEBI" id="CHEBI:456216"/>
        <dbReference type="EC" id="2.7.11.1"/>
    </reaction>
</comment>
<comment type="catalytic activity">
    <reaction evidence="6">
        <text>L-threonyl-[protein] + ATP = O-phospho-L-threonyl-[protein] + ADP + H(+)</text>
        <dbReference type="Rhea" id="RHEA:46608"/>
        <dbReference type="Rhea" id="RHEA-COMP:11060"/>
        <dbReference type="Rhea" id="RHEA-COMP:11605"/>
        <dbReference type="ChEBI" id="CHEBI:15378"/>
        <dbReference type="ChEBI" id="CHEBI:30013"/>
        <dbReference type="ChEBI" id="CHEBI:30616"/>
        <dbReference type="ChEBI" id="CHEBI:61977"/>
        <dbReference type="ChEBI" id="CHEBI:456216"/>
        <dbReference type="EC" id="2.7.11.1"/>
    </reaction>
</comment>
<comment type="subunit">
    <text evidence="8">Interacts with LATS1, and this interaction inhibits phosphorylation of tsr/cofilin.</text>
</comment>
<comment type="subcellular location">
    <subcellularLocation>
        <location>Cytoplasm</location>
    </subcellularLocation>
    <subcellularLocation>
        <location>Cleavage furrow</location>
    </subcellularLocation>
    <subcellularLocation>
        <location>Midbody</location>
    </subcellularLocation>
    <text>Localizes to the cleavage furrow and the midbody at cytokinesis.</text>
</comment>
<comment type="alternative products">
    <event type="alternative splicing"/>
    <isoform>
        <id>Q8IR79-1</id>
        <name>1</name>
        <sequence type="displayed"/>
    </isoform>
    <isoform>
        <id>Q8IR79-2</id>
        <name>2</name>
        <sequence type="described" ref="VSP_016309"/>
    </isoform>
    <isoform>
        <id>Q8IR79-3</id>
        <name>3</name>
        <sequence type="described" ref="VSP_016308 VSP_016310"/>
    </isoform>
</comment>
<comment type="tissue specificity">
    <text evidence="7">Expressed throughout the imaginal disks of the eye, leg and wing.</text>
</comment>
<comment type="developmental stage">
    <text evidence="6 7">Expressed from early third instar to late pupal stages.</text>
</comment>
<comment type="PTM">
    <text evidence="1">Phosphorylated on serine and/or threonine residues by ROCK1. Phosphorylated by PAK4 resulting in increased LIMK1 ability to phosphorylate cofilin. May be dephosphorylated and inactivated by SSH1 (By similarity).</text>
</comment>
<comment type="similarity">
    <text evidence="14">Belongs to the protein kinase superfamily. TKL Ser/Thr protein kinase family.</text>
</comment>
<evidence type="ECO:0000250" key="1"/>
<evidence type="ECO:0000255" key="2">
    <source>
        <dbReference type="PROSITE-ProRule" id="PRU00125"/>
    </source>
</evidence>
<evidence type="ECO:0000255" key="3">
    <source>
        <dbReference type="PROSITE-ProRule" id="PRU00143"/>
    </source>
</evidence>
<evidence type="ECO:0000255" key="4">
    <source>
        <dbReference type="PROSITE-ProRule" id="PRU00159"/>
    </source>
</evidence>
<evidence type="ECO:0000256" key="5">
    <source>
        <dbReference type="SAM" id="MobiDB-lite"/>
    </source>
</evidence>
<evidence type="ECO:0000269" key="6">
    <source>
    </source>
</evidence>
<evidence type="ECO:0000269" key="7">
    <source>
    </source>
</evidence>
<evidence type="ECO:0000269" key="8">
    <source>
    </source>
</evidence>
<evidence type="ECO:0000269" key="9">
    <source>
    </source>
</evidence>
<evidence type="ECO:0000269" key="10">
    <source>
    </source>
</evidence>
<evidence type="ECO:0000269" key="11">
    <source>
    </source>
</evidence>
<evidence type="ECO:0000303" key="12">
    <source>
    </source>
</evidence>
<evidence type="ECO:0000303" key="13">
    <source>
    </source>
</evidence>
<evidence type="ECO:0000305" key="14"/>
<reference key="1">
    <citation type="journal article" date="2000" name="Biochem. Biophys. Res. Commun.">
        <title>A Drosophila homolog of LIM-kinase phosphorylates cofilin and induces actin cytoskeletal reorganization.</title>
        <authorList>
            <person name="Ohashi K."/>
            <person name="Hosoya T."/>
            <person name="Takahashi K."/>
            <person name="Hing H."/>
            <person name="Mizuno K."/>
        </authorList>
    </citation>
    <scope>NUCLEOTIDE SEQUENCE [MRNA] (ISOFORMS 1 AND 2)</scope>
    <scope>FUNCTION</scope>
    <scope>CATALYTIC ACTIVITY</scope>
    <scope>SUBCELLULAR LOCATION</scope>
    <scope>DEVELOPMENTAL STAGE</scope>
    <scope>MUTAGENESIS OF ASP-522</scope>
</reference>
<reference key="2">
    <citation type="journal article" date="2000" name="Science">
        <title>The genome sequence of Drosophila melanogaster.</title>
        <authorList>
            <person name="Adams M.D."/>
            <person name="Celniker S.E."/>
            <person name="Holt R.A."/>
            <person name="Evans C.A."/>
            <person name="Gocayne J.D."/>
            <person name="Amanatides P.G."/>
            <person name="Scherer S.E."/>
            <person name="Li P.W."/>
            <person name="Hoskins R.A."/>
            <person name="Galle R.F."/>
            <person name="George R.A."/>
            <person name="Lewis S.E."/>
            <person name="Richards S."/>
            <person name="Ashburner M."/>
            <person name="Henderson S.N."/>
            <person name="Sutton G.G."/>
            <person name="Wortman J.R."/>
            <person name="Yandell M.D."/>
            <person name="Zhang Q."/>
            <person name="Chen L.X."/>
            <person name="Brandon R.C."/>
            <person name="Rogers Y.-H.C."/>
            <person name="Blazej R.G."/>
            <person name="Champe M."/>
            <person name="Pfeiffer B.D."/>
            <person name="Wan K.H."/>
            <person name="Doyle C."/>
            <person name="Baxter E.G."/>
            <person name="Helt G."/>
            <person name="Nelson C.R."/>
            <person name="Miklos G.L.G."/>
            <person name="Abril J.F."/>
            <person name="Agbayani A."/>
            <person name="An H.-J."/>
            <person name="Andrews-Pfannkoch C."/>
            <person name="Baldwin D."/>
            <person name="Ballew R.M."/>
            <person name="Basu A."/>
            <person name="Baxendale J."/>
            <person name="Bayraktaroglu L."/>
            <person name="Beasley E.M."/>
            <person name="Beeson K.Y."/>
            <person name="Benos P.V."/>
            <person name="Berman B.P."/>
            <person name="Bhandari D."/>
            <person name="Bolshakov S."/>
            <person name="Borkova D."/>
            <person name="Botchan M.R."/>
            <person name="Bouck J."/>
            <person name="Brokstein P."/>
            <person name="Brottier P."/>
            <person name="Burtis K.C."/>
            <person name="Busam D.A."/>
            <person name="Butler H."/>
            <person name="Cadieu E."/>
            <person name="Center A."/>
            <person name="Chandra I."/>
            <person name="Cherry J.M."/>
            <person name="Cawley S."/>
            <person name="Dahlke C."/>
            <person name="Davenport L.B."/>
            <person name="Davies P."/>
            <person name="de Pablos B."/>
            <person name="Delcher A."/>
            <person name="Deng Z."/>
            <person name="Mays A.D."/>
            <person name="Dew I."/>
            <person name="Dietz S.M."/>
            <person name="Dodson K."/>
            <person name="Doup L.E."/>
            <person name="Downes M."/>
            <person name="Dugan-Rocha S."/>
            <person name="Dunkov B.C."/>
            <person name="Dunn P."/>
            <person name="Durbin K.J."/>
            <person name="Evangelista C.C."/>
            <person name="Ferraz C."/>
            <person name="Ferriera S."/>
            <person name="Fleischmann W."/>
            <person name="Fosler C."/>
            <person name="Gabrielian A.E."/>
            <person name="Garg N.S."/>
            <person name="Gelbart W.M."/>
            <person name="Glasser K."/>
            <person name="Glodek A."/>
            <person name="Gong F."/>
            <person name="Gorrell J.H."/>
            <person name="Gu Z."/>
            <person name="Guan P."/>
            <person name="Harris M."/>
            <person name="Harris N.L."/>
            <person name="Harvey D.A."/>
            <person name="Heiman T.J."/>
            <person name="Hernandez J.R."/>
            <person name="Houck J."/>
            <person name="Hostin D."/>
            <person name="Houston K.A."/>
            <person name="Howland T.J."/>
            <person name="Wei M.-H."/>
            <person name="Ibegwam C."/>
            <person name="Jalali M."/>
            <person name="Kalush F."/>
            <person name="Karpen G.H."/>
            <person name="Ke Z."/>
            <person name="Kennison J.A."/>
            <person name="Ketchum K.A."/>
            <person name="Kimmel B.E."/>
            <person name="Kodira C.D."/>
            <person name="Kraft C.L."/>
            <person name="Kravitz S."/>
            <person name="Kulp D."/>
            <person name="Lai Z."/>
            <person name="Lasko P."/>
            <person name="Lei Y."/>
            <person name="Levitsky A.A."/>
            <person name="Li J.H."/>
            <person name="Li Z."/>
            <person name="Liang Y."/>
            <person name="Lin X."/>
            <person name="Liu X."/>
            <person name="Mattei B."/>
            <person name="McIntosh T.C."/>
            <person name="McLeod M.P."/>
            <person name="McPherson D."/>
            <person name="Merkulov G."/>
            <person name="Milshina N.V."/>
            <person name="Mobarry C."/>
            <person name="Morris J."/>
            <person name="Moshrefi A."/>
            <person name="Mount S.M."/>
            <person name="Moy M."/>
            <person name="Murphy B."/>
            <person name="Murphy L."/>
            <person name="Muzny D.M."/>
            <person name="Nelson D.L."/>
            <person name="Nelson D.R."/>
            <person name="Nelson K.A."/>
            <person name="Nixon K."/>
            <person name="Nusskern D.R."/>
            <person name="Pacleb J.M."/>
            <person name="Palazzolo M."/>
            <person name="Pittman G.S."/>
            <person name="Pan S."/>
            <person name="Pollard J."/>
            <person name="Puri V."/>
            <person name="Reese M.G."/>
            <person name="Reinert K."/>
            <person name="Remington K."/>
            <person name="Saunders R.D.C."/>
            <person name="Scheeler F."/>
            <person name="Shen H."/>
            <person name="Shue B.C."/>
            <person name="Siden-Kiamos I."/>
            <person name="Simpson M."/>
            <person name="Skupski M.P."/>
            <person name="Smith T.J."/>
            <person name="Spier E."/>
            <person name="Spradling A.C."/>
            <person name="Stapleton M."/>
            <person name="Strong R."/>
            <person name="Sun E."/>
            <person name="Svirskas R."/>
            <person name="Tector C."/>
            <person name="Turner R."/>
            <person name="Venter E."/>
            <person name="Wang A.H."/>
            <person name="Wang X."/>
            <person name="Wang Z.-Y."/>
            <person name="Wassarman D.A."/>
            <person name="Weinstock G.M."/>
            <person name="Weissenbach J."/>
            <person name="Williams S.M."/>
            <person name="Woodage T."/>
            <person name="Worley K.C."/>
            <person name="Wu D."/>
            <person name="Yang S."/>
            <person name="Yao Q.A."/>
            <person name="Ye J."/>
            <person name="Yeh R.-F."/>
            <person name="Zaveri J.S."/>
            <person name="Zhan M."/>
            <person name="Zhang G."/>
            <person name="Zhao Q."/>
            <person name="Zheng L."/>
            <person name="Zheng X.H."/>
            <person name="Zhong F.N."/>
            <person name="Zhong W."/>
            <person name="Zhou X."/>
            <person name="Zhu S.C."/>
            <person name="Zhu X."/>
            <person name="Smith H.O."/>
            <person name="Gibbs R.A."/>
            <person name="Myers E.W."/>
            <person name="Rubin G.M."/>
            <person name="Venter J.C."/>
        </authorList>
    </citation>
    <scope>NUCLEOTIDE SEQUENCE [LARGE SCALE GENOMIC DNA]</scope>
    <source>
        <strain>Berkeley</strain>
    </source>
</reference>
<reference key="3">
    <citation type="journal article" date="2002" name="Genome Biol.">
        <title>Annotation of the Drosophila melanogaster euchromatic genome: a systematic review.</title>
        <authorList>
            <person name="Misra S."/>
            <person name="Crosby M.A."/>
            <person name="Mungall C.J."/>
            <person name="Matthews B.B."/>
            <person name="Campbell K.S."/>
            <person name="Hradecky P."/>
            <person name="Huang Y."/>
            <person name="Kaminker J.S."/>
            <person name="Millburn G.H."/>
            <person name="Prochnik S.E."/>
            <person name="Smith C.D."/>
            <person name="Tupy J.L."/>
            <person name="Whitfield E.J."/>
            <person name="Bayraktaroglu L."/>
            <person name="Berman B.P."/>
            <person name="Bettencourt B.R."/>
            <person name="Celniker S.E."/>
            <person name="de Grey A.D.N.J."/>
            <person name="Drysdale R.A."/>
            <person name="Harris N.L."/>
            <person name="Richter J."/>
            <person name="Russo S."/>
            <person name="Schroeder A.J."/>
            <person name="Shu S.Q."/>
            <person name="Stapleton M."/>
            <person name="Yamada C."/>
            <person name="Ashburner M."/>
            <person name="Gelbart W.M."/>
            <person name="Rubin G.M."/>
            <person name="Lewis S.E."/>
        </authorList>
    </citation>
    <scope>GENOME REANNOTATION</scope>
    <source>
        <strain>Berkeley</strain>
    </source>
</reference>
<reference key="4">
    <citation type="journal article" date="2002" name="Genome Biol.">
        <title>A Drosophila full-length cDNA resource.</title>
        <authorList>
            <person name="Stapleton M."/>
            <person name="Carlson J.W."/>
            <person name="Brokstein P."/>
            <person name="Yu C."/>
            <person name="Champe M."/>
            <person name="George R.A."/>
            <person name="Guarin H."/>
            <person name="Kronmiller B."/>
            <person name="Pacleb J.M."/>
            <person name="Park S."/>
            <person name="Wan K.H."/>
            <person name="Rubin G.M."/>
            <person name="Celniker S.E."/>
        </authorList>
    </citation>
    <scope>NUCLEOTIDE SEQUENCE [LARGE SCALE MRNA] (ISOFORM 2)</scope>
    <source>
        <strain>Berkeley</strain>
        <tissue>Embryo</tissue>
    </source>
</reference>
<reference key="5">
    <citation type="journal article" date="2004" name="Curr. Biol.">
        <title>Rho-LIM kinase signaling regulates ecdysone-induced gene expression and morphogenesis during Drosophila metamorphosis.</title>
        <authorList>
            <person name="Chen G.-C."/>
            <person name="Gajowniczek P."/>
            <person name="Settleman J."/>
        </authorList>
    </citation>
    <scope>FUNCTION</scope>
    <scope>TISSUE SPECIFICITY</scope>
    <scope>DEVELOPMENTAL STAGE</scope>
    <scope>MUTAGENESIS OF ASP-522</scope>
</reference>
<reference key="6">
    <citation type="journal article" date="2004" name="Nat. Cell Biol.">
        <title>LATS1 tumour suppressor affects cytokinesis by inhibiting LIMK1.</title>
        <authorList>
            <person name="Yang X."/>
            <person name="Yu K."/>
            <person name="Hao Y."/>
            <person name="Li D.-M."/>
            <person name="Stewart R.A."/>
            <person name="Insogna K.L."/>
            <person name="Xu T."/>
        </authorList>
    </citation>
    <scope>FUNCTION</scope>
    <scope>INTERACTION WITH LATS1</scope>
    <scope>SUBCELLULAR LOCATION</scope>
    <scope>MUTAGENESIS OF ASP-522</scope>
</reference>
<reference key="7">
    <citation type="journal article" date="2004" name="Neuron">
        <title>Rho GTPases regulate axon growth through convergent and divergent signaling pathways.</title>
        <authorList>
            <person name="Ng J."/>
            <person name="Luo L."/>
        </authorList>
    </citation>
    <scope>FUNCTION</scope>
    <scope>MUTAGENESIS OF ASP-522</scope>
</reference>
<reference key="8">
    <citation type="journal article" date="2005" name="Mol. Cell. Biol.">
        <title>Regulation of Rho and Rac signaling to the actin cytoskeleton by paxillin during Drosophila development.</title>
        <authorList>
            <person name="Chen G.-C."/>
            <person name="Turano B."/>
            <person name="Ruest P.J."/>
            <person name="Hagel M."/>
            <person name="Settleman J."/>
            <person name="Thomas S.M."/>
        </authorList>
    </citation>
    <scope>FUNCTION</scope>
    <scope>MUTAGENESIS OF ASP-522</scope>
</reference>
<reference key="9">
    <citation type="journal article" date="2007" name="Mol. Biosyst.">
        <title>An integrated chemical, mass spectrometric and computational strategy for (quantitative) phosphoproteomics: application to Drosophila melanogaster Kc167 cells.</title>
        <authorList>
            <person name="Bodenmiller B."/>
            <person name="Mueller L.N."/>
            <person name="Pedrioli P.G.A."/>
            <person name="Pflieger D."/>
            <person name="Juenger M.A."/>
            <person name="Eng J.K."/>
            <person name="Aebersold R."/>
            <person name="Tao W.A."/>
        </authorList>
    </citation>
    <scope>PHOSPHORYLATION [LARGE SCALE ANALYSIS] AT SER-1000</scope>
    <scope>IDENTIFICATION BY MASS SPECTROMETRY</scope>
</reference>
<accession>Q8IR79</accession>
<accession>Q8IR78</accession>
<accession>Q9GV18</accession>
<accession>Q9GV19</accession>
<accession>Q9VYL6</accession>
<name>LIMK1_DROME</name>
<sequence>MHHQQRLRANGGRGGTGLGAGSGPVSGGHSPLCAHCRGQLLPHPEEPIVMALGQQWHCDCFRCSVCEGHLHNWYFEREGLLYCREDYYGRFGDACQQCMAVITGPVMVAGEHKFHPECFCCTACGSFIGEGESYALVERSKLYCGQCYGKRSCQPADAKARITTAGKPMHSIRLVEIPKDATPGLRVDGVALDDGCPTVRITDLFCNFFLWLTSMAEQCCGAPYRIDVNLTNLHIGDRILEVNGTPVSDSSVEQIDKLIRSNEKMLQLTVEHDPVQVCRSCSQADIQRAMSASTLILPLSTSASSVEVGRERLYKTPGEQGTKARKLRQATNASTTIPPAAGATAMTQLKEKERCSSLSKLLDEQHQAQQHSAHPQLYDLSRTQSCRVVQKPQRIFRATDLVIGEKLGEGFFGKVFKVTHRQSGEVMVLKELHRADEEAQRNFIKEVAVLRLLDHRHVLKFIGVLYKDKKLHMVTEYVAGGCLKELIHDPAQVLPWPQRVRLARDIACGMSYLHSMNIIHRDLNSMNCLVREDRSVIVADFGLARSVDAPRLPSGNMTPGGYGSGANSDAPMSPSGTLRRSKSRQRRQRYTVVGNPYWMAPEMMKGLKYDEKVDVFSFGIMLCEIIGRVEADPDFMPRNSDFSLNQQEFREKFCAQCPEPFVKVAFVCCDLNPDMRPCFETLHVWLQRLADDLAADRVPPERLLHEIETFQEWYASSEDALSPTSQRSLNNLDELVKSAVDSEISPVEKEKENMVIKPQDIPKSPHLGKDFSPSGERLRDSMRARRRQRFLGAQEERRNLTPDTESKERALKKALKKCRPFGERGYLVDLRAGAELQLEDVRDLNTYSDVDSSCDTSLNYHDVNNLPAAQEDENTVKPGKEELLEESTNKPSNQESQHHRLAIDDMRTRLNQCRSKFEHLEEASRRNFNQSQHSMKNFFKTPPVALKMFQRLEHEAAALNGGNNCPPPPPRTQRINQTPIFGRKNPPVAIVGQKLQHAESLEDLASSGVAKQLATPAPKRSKATATTKGGQSSNPPLFLPPSLNISVALNSNGNVTTTTNTNSSCPPSASDWLPKKHKLTLPLPSAQQQRTSSNHRLPMCNNKGKTLKPLPSRTGSQGIPASNCVSPTRSSRPGSPTKHLAQRHTAATAQRLTNAAATHQQQHQQQSSKTTRLNILSPEKVHRLGARLTDQKQKMREEAAATASSVGGAGCAAGTAAGSLNGHRTIGSSGTPNSAVGERRRRAAPSPPVRTHFNTRC</sequence>